<accession>C4K228</accession>
<feature type="chain" id="PRO_1000213046" description="ATP synthase gamma chain">
    <location>
        <begin position="1"/>
        <end position="323"/>
    </location>
</feature>
<organism>
    <name type="scientific">Rickettsia peacockii (strain Rustic)</name>
    <dbReference type="NCBI Taxonomy" id="562019"/>
    <lineage>
        <taxon>Bacteria</taxon>
        <taxon>Pseudomonadati</taxon>
        <taxon>Pseudomonadota</taxon>
        <taxon>Alphaproteobacteria</taxon>
        <taxon>Rickettsiales</taxon>
        <taxon>Rickettsiaceae</taxon>
        <taxon>Rickettsieae</taxon>
        <taxon>Rickettsia</taxon>
        <taxon>spotted fever group</taxon>
    </lineage>
</organism>
<dbReference type="EMBL" id="CP001227">
    <property type="protein sequence ID" value="ACR47626.1"/>
    <property type="molecule type" value="Genomic_DNA"/>
</dbReference>
<dbReference type="RefSeq" id="WP_012736838.1">
    <property type="nucleotide sequence ID" value="NC_012730.1"/>
</dbReference>
<dbReference type="SMR" id="C4K228"/>
<dbReference type="KEGG" id="rpk:RPR_04925"/>
<dbReference type="HOGENOM" id="CLU_050669_0_1_5"/>
<dbReference type="Proteomes" id="UP000005015">
    <property type="component" value="Chromosome"/>
</dbReference>
<dbReference type="GO" id="GO:0005886">
    <property type="term" value="C:plasma membrane"/>
    <property type="evidence" value="ECO:0007669"/>
    <property type="project" value="UniProtKB-SubCell"/>
</dbReference>
<dbReference type="GO" id="GO:0045259">
    <property type="term" value="C:proton-transporting ATP synthase complex"/>
    <property type="evidence" value="ECO:0007669"/>
    <property type="project" value="UniProtKB-KW"/>
</dbReference>
<dbReference type="GO" id="GO:0005524">
    <property type="term" value="F:ATP binding"/>
    <property type="evidence" value="ECO:0007669"/>
    <property type="project" value="UniProtKB-UniRule"/>
</dbReference>
<dbReference type="GO" id="GO:0046933">
    <property type="term" value="F:proton-transporting ATP synthase activity, rotational mechanism"/>
    <property type="evidence" value="ECO:0007669"/>
    <property type="project" value="UniProtKB-UniRule"/>
</dbReference>
<dbReference type="GO" id="GO:0042777">
    <property type="term" value="P:proton motive force-driven plasma membrane ATP synthesis"/>
    <property type="evidence" value="ECO:0007669"/>
    <property type="project" value="UniProtKB-UniRule"/>
</dbReference>
<dbReference type="CDD" id="cd12151">
    <property type="entry name" value="F1-ATPase_gamma"/>
    <property type="match status" value="1"/>
</dbReference>
<dbReference type="Gene3D" id="3.40.1380.10">
    <property type="match status" value="1"/>
</dbReference>
<dbReference type="Gene3D" id="1.10.287.80">
    <property type="entry name" value="ATP synthase, gamma subunit, helix hairpin domain"/>
    <property type="match status" value="2"/>
</dbReference>
<dbReference type="HAMAP" id="MF_00815">
    <property type="entry name" value="ATP_synth_gamma_bact"/>
    <property type="match status" value="1"/>
</dbReference>
<dbReference type="InterPro" id="IPR035968">
    <property type="entry name" value="ATP_synth_F1_ATPase_gsu"/>
</dbReference>
<dbReference type="InterPro" id="IPR000131">
    <property type="entry name" value="ATP_synth_F1_gsu"/>
</dbReference>
<dbReference type="InterPro" id="IPR022436">
    <property type="entry name" value="RPE2"/>
</dbReference>
<dbReference type="NCBIfam" id="TIGR01146">
    <property type="entry name" value="ATPsyn_F1gamma"/>
    <property type="match status" value="1"/>
</dbReference>
<dbReference type="NCBIfam" id="TIGR03774">
    <property type="entry name" value="RPE2"/>
    <property type="match status" value="1"/>
</dbReference>
<dbReference type="PANTHER" id="PTHR11693">
    <property type="entry name" value="ATP SYNTHASE GAMMA CHAIN"/>
    <property type="match status" value="1"/>
</dbReference>
<dbReference type="PANTHER" id="PTHR11693:SF22">
    <property type="entry name" value="ATP SYNTHASE SUBUNIT GAMMA, MITOCHONDRIAL"/>
    <property type="match status" value="1"/>
</dbReference>
<dbReference type="Pfam" id="PF00231">
    <property type="entry name" value="ATP-synt"/>
    <property type="match status" value="1"/>
</dbReference>
<dbReference type="PRINTS" id="PR00126">
    <property type="entry name" value="ATPASEGAMMA"/>
</dbReference>
<dbReference type="SUPFAM" id="SSF52943">
    <property type="entry name" value="ATP synthase (F1-ATPase), gamma subunit"/>
    <property type="match status" value="1"/>
</dbReference>
<name>ATPG_RICPU</name>
<protein>
    <recommendedName>
        <fullName evidence="1">ATP synthase gamma chain</fullName>
    </recommendedName>
    <alternativeName>
        <fullName evidence="1">ATP synthase F1 sector gamma subunit</fullName>
    </alternativeName>
    <alternativeName>
        <fullName evidence="1">F-ATPase gamma subunit</fullName>
    </alternativeName>
</protein>
<keyword id="KW-0066">ATP synthesis</keyword>
<keyword id="KW-0997">Cell inner membrane</keyword>
<keyword id="KW-1003">Cell membrane</keyword>
<keyword id="KW-0139">CF(1)</keyword>
<keyword id="KW-0375">Hydrogen ion transport</keyword>
<keyword id="KW-0406">Ion transport</keyword>
<keyword id="KW-0472">Membrane</keyword>
<keyword id="KW-0813">Transport</keyword>
<sequence length="323" mass="36710">MSNLKQLRTRIKSVKSTQKITKAMQLVSASKMAKIKSQIANSNFYIEAVSKMMSAILSIDIYELSIEEQKFFNTVPNKANLLIVMTSQRGLCGTFNYSIIKQVKNDIKELENKGEQIKLIIIGKKGYEALKRQYVNYIDSYFELPKIHDENLMLQVKQKIMSAVENLEVSNCVIYFNKFKNAMTQIMTRQQILPVAKYQDHSMIDNPIVNLVGFGYKERGAKPINNRRATSDIVGESKSIDYNYEYEGENLISNLINLYVNSQINYALLQSRASEEGARMTAMENATNNANDLISKLVLKLNRSRQAIITTELIEIIAGSEAV</sequence>
<gene>
    <name evidence="1" type="primary">atpG</name>
    <name type="ordered locus">RPR_04925</name>
</gene>
<comment type="function">
    <text evidence="1">Produces ATP from ADP in the presence of a proton gradient across the membrane. The gamma chain is believed to be important in regulating ATPase activity and the flow of protons through the CF(0) complex.</text>
</comment>
<comment type="subunit">
    <text evidence="1">F-type ATPases have 2 components, CF(1) - the catalytic core - and CF(0) - the membrane proton channel. CF(1) has five subunits: alpha(3), beta(3), gamma(1), delta(1), epsilon(1). CF(0) has three main subunits: a, b and c.</text>
</comment>
<comment type="subcellular location">
    <subcellularLocation>
        <location evidence="1">Cell inner membrane</location>
        <topology evidence="1">Peripheral membrane protein</topology>
    </subcellularLocation>
</comment>
<comment type="similarity">
    <text evidence="1">Belongs to the ATPase gamma chain family.</text>
</comment>
<evidence type="ECO:0000255" key="1">
    <source>
        <dbReference type="HAMAP-Rule" id="MF_00815"/>
    </source>
</evidence>
<proteinExistence type="inferred from homology"/>
<reference key="1">
    <citation type="journal article" date="2009" name="PLoS ONE">
        <title>Genome sequence of the endosymbiont Rickettsia peacockii and comparison with virulent Rickettsia rickettsii: identification of virulence factors.</title>
        <authorList>
            <person name="Felsheim R.F."/>
            <person name="Kurtti T.J."/>
            <person name="Munderloh U.G."/>
        </authorList>
    </citation>
    <scope>NUCLEOTIDE SEQUENCE [LARGE SCALE GENOMIC DNA]</scope>
    <source>
        <strain>Rustic</strain>
    </source>
</reference>